<organism>
    <name type="scientific">Rickettsia canadensis (strain McKiel)</name>
    <dbReference type="NCBI Taxonomy" id="293613"/>
    <lineage>
        <taxon>Bacteria</taxon>
        <taxon>Pseudomonadati</taxon>
        <taxon>Pseudomonadota</taxon>
        <taxon>Alphaproteobacteria</taxon>
        <taxon>Rickettsiales</taxon>
        <taxon>Rickettsiaceae</taxon>
        <taxon>Rickettsieae</taxon>
        <taxon>Rickettsia</taxon>
        <taxon>belli group</taxon>
    </lineage>
</organism>
<accession>A8F047</accession>
<evidence type="ECO:0000255" key="1"/>
<reference key="1">
    <citation type="submission" date="2007-09" db="EMBL/GenBank/DDBJ databases">
        <title>Complete genome sequence of Rickettsia canadensis.</title>
        <authorList>
            <person name="Madan A."/>
            <person name="Fahey J."/>
            <person name="Helton E."/>
            <person name="Ketteman M."/>
            <person name="Madan A."/>
            <person name="Rodrigues S."/>
            <person name="Sanchez A."/>
            <person name="Whiting M."/>
            <person name="Dasch G."/>
            <person name="Eremeeva M."/>
        </authorList>
    </citation>
    <scope>NUCLEOTIDE SEQUENCE [LARGE SCALE GENOMIC DNA]</scope>
    <source>
        <strain>McKiel</strain>
    </source>
</reference>
<gene>
    <name type="ordered locus">A1E_05320</name>
</gene>
<feature type="signal peptide" evidence="1">
    <location>
        <begin position="1"/>
        <end position="22"/>
    </location>
</feature>
<feature type="chain" id="PRO_0000317022" description="Putative adhesin A1E_05320">
    <location>
        <begin position="23"/>
        <end position="224"/>
    </location>
</feature>
<keyword id="KW-0732">Signal</keyword>
<protein>
    <recommendedName>
        <fullName>Putative adhesin A1E_05320</fullName>
    </recommendedName>
</protein>
<sequence>MKKLLLIAATSATMLSSTLSFADGMDNEWYLRIGAGAAMFNKEKDEATSVKLKSNMTVSVDLGIGYYFSKNFRTDLTLGTIIGGKLKKSGTATNVPFSGTNVSVSYKPTITRLLINGYVDLTNFNIFDVFAGAGVGPALVKEKITYNGITGLASTTKNRTNISYKLTLGTSAQIADDVKVELAYSWINDGKAKSKNVVYQGQKVQIGGMRYQSHNLTASIRFDI</sequence>
<dbReference type="EMBL" id="CP000409">
    <property type="protein sequence ID" value="ABV73980.1"/>
    <property type="molecule type" value="Genomic_DNA"/>
</dbReference>
<dbReference type="RefSeq" id="WP_012149175.1">
    <property type="nucleotide sequence ID" value="NC_009879.1"/>
</dbReference>
<dbReference type="STRING" id="293613.A1E_05320"/>
<dbReference type="KEGG" id="rcm:A1E_05320"/>
<dbReference type="eggNOG" id="COG3637">
    <property type="taxonomic scope" value="Bacteria"/>
</dbReference>
<dbReference type="HOGENOM" id="CLU_1146500_0_0_5"/>
<dbReference type="Proteomes" id="UP000007056">
    <property type="component" value="Chromosome"/>
</dbReference>
<dbReference type="GO" id="GO:0009279">
    <property type="term" value="C:cell outer membrane"/>
    <property type="evidence" value="ECO:0007669"/>
    <property type="project" value="InterPro"/>
</dbReference>
<dbReference type="Gene3D" id="2.40.160.20">
    <property type="match status" value="1"/>
</dbReference>
<dbReference type="InterPro" id="IPR011250">
    <property type="entry name" value="OMP/PagP_b-brl"/>
</dbReference>
<dbReference type="InterPro" id="IPR000498">
    <property type="entry name" value="OmpA-like_TM_dom"/>
</dbReference>
<dbReference type="Pfam" id="PF01389">
    <property type="entry name" value="OmpA_membrane"/>
    <property type="match status" value="1"/>
</dbReference>
<dbReference type="SUPFAM" id="SSF56925">
    <property type="entry name" value="OMPA-like"/>
    <property type="match status" value="1"/>
</dbReference>
<proteinExistence type="inferred from homology"/>
<name>Y5320_RICCK</name>